<evidence type="ECO:0000255" key="1">
    <source>
        <dbReference type="PROSITE-ProRule" id="PRU00303"/>
    </source>
</evidence>
<evidence type="ECO:0000305" key="2"/>
<name>SILC_SALTM</name>
<comment type="function">
    <text>Component of the sil cation-efflux system that confers resistance to silver. May be part of a three-component cation/proton antiporter.</text>
</comment>
<comment type="subcellular location">
    <subcellularLocation>
        <location evidence="2">Cell outer membrane</location>
        <topology evidence="1">Lipid-anchor</topology>
    </subcellularLocation>
</comment>
<comment type="similarity">
    <text evidence="2">Belongs to the outer membrane factor (OMF) (TC 1.B.17) family.</text>
</comment>
<reference key="1">
    <citation type="journal article" date="1999" name="Nat. Med.">
        <title>Molecular basis for resistance to silver cations in Salmonella.</title>
        <authorList>
            <person name="Gupta A."/>
            <person name="Matsui K."/>
            <person name="Lo J.-F."/>
            <person name="Silver S."/>
        </authorList>
    </citation>
    <scope>NUCLEOTIDE SEQUENCE [GENOMIC DNA]</scope>
</reference>
<gene>
    <name type="primary">silC</name>
</gene>
<feature type="signal peptide" evidence="1">
    <location>
        <begin position="1"/>
        <end position="17"/>
    </location>
</feature>
<feature type="chain" id="PRO_0000031000" description="Probable outer membrane lipoprotein SilC">
    <location>
        <begin position="18"/>
        <end position="461"/>
    </location>
</feature>
<feature type="lipid moiety-binding region" description="N-palmitoyl cysteine" evidence="2">
    <location>
        <position position="18"/>
    </location>
</feature>
<feature type="lipid moiety-binding region" description="S-diacylglycerol cysteine" evidence="2">
    <location>
        <position position="18"/>
    </location>
</feature>
<dbReference type="EMBL" id="AF067954">
    <property type="protein sequence ID" value="AAD11746.1"/>
    <property type="molecule type" value="Genomic_DNA"/>
</dbReference>
<dbReference type="RefSeq" id="WP_001507116.1">
    <property type="nucleotide sequence ID" value="NZ_WIDF01000005.1"/>
</dbReference>
<dbReference type="SMR" id="Q9ZHD2"/>
<dbReference type="TCDB" id="1.B.17.3.4">
    <property type="family name" value="the outer membrane factor (omf) family"/>
</dbReference>
<dbReference type="GeneID" id="92830466"/>
<dbReference type="GO" id="GO:0009279">
    <property type="term" value="C:cell outer membrane"/>
    <property type="evidence" value="ECO:0007669"/>
    <property type="project" value="UniProtKB-SubCell"/>
</dbReference>
<dbReference type="GO" id="GO:0015562">
    <property type="term" value="F:efflux transmembrane transporter activity"/>
    <property type="evidence" value="ECO:0007669"/>
    <property type="project" value="InterPro"/>
</dbReference>
<dbReference type="Gene3D" id="1.20.1600.10">
    <property type="entry name" value="Outer membrane efflux proteins (OEP)"/>
    <property type="match status" value="1"/>
</dbReference>
<dbReference type="Gene3D" id="2.20.200.10">
    <property type="entry name" value="Outer membrane efflux proteins (OEP)"/>
    <property type="match status" value="1"/>
</dbReference>
<dbReference type="InterPro" id="IPR050737">
    <property type="entry name" value="OMF"/>
</dbReference>
<dbReference type="InterPro" id="IPR003423">
    <property type="entry name" value="OMP_efflux"/>
</dbReference>
<dbReference type="InterPro" id="IPR010131">
    <property type="entry name" value="RND_efflux_OM_lipoprot_NodT"/>
</dbReference>
<dbReference type="NCBIfam" id="TIGR01845">
    <property type="entry name" value="outer_NodT"/>
    <property type="match status" value="1"/>
</dbReference>
<dbReference type="NCBIfam" id="NF007347">
    <property type="entry name" value="PRK09837.1"/>
    <property type="match status" value="1"/>
</dbReference>
<dbReference type="PANTHER" id="PTHR30203:SF32">
    <property type="entry name" value="CATION EFFLUX SYSTEM PROTEIN CUSC"/>
    <property type="match status" value="1"/>
</dbReference>
<dbReference type="PANTHER" id="PTHR30203">
    <property type="entry name" value="OUTER MEMBRANE CATION EFFLUX PROTEIN"/>
    <property type="match status" value="1"/>
</dbReference>
<dbReference type="Pfam" id="PF02321">
    <property type="entry name" value="OEP"/>
    <property type="match status" value="2"/>
</dbReference>
<dbReference type="SUPFAM" id="SSF56954">
    <property type="entry name" value="Outer membrane efflux proteins (OEP)"/>
    <property type="match status" value="1"/>
</dbReference>
<dbReference type="PROSITE" id="PS51257">
    <property type="entry name" value="PROKAR_LIPOPROTEIN"/>
    <property type="match status" value="1"/>
</dbReference>
<protein>
    <recommendedName>
        <fullName>Probable outer membrane lipoprotein SilC</fullName>
    </recommendedName>
</protein>
<proteinExistence type="inferred from homology"/>
<organism>
    <name type="scientific">Salmonella typhimurium</name>
    <dbReference type="NCBI Taxonomy" id="90371"/>
    <lineage>
        <taxon>Bacteria</taxon>
        <taxon>Pseudomonadati</taxon>
        <taxon>Pseudomonadota</taxon>
        <taxon>Gammaproteobacteria</taxon>
        <taxon>Enterobacterales</taxon>
        <taxon>Enterobacteriaceae</taxon>
        <taxon>Salmonella</taxon>
    </lineage>
</organism>
<keyword id="KW-0998">Cell outer membrane</keyword>
<keyword id="KW-0449">Lipoprotein</keyword>
<keyword id="KW-0472">Membrane</keyword>
<keyword id="KW-0564">Palmitate</keyword>
<keyword id="KW-0614">Plasmid</keyword>
<keyword id="KW-0732">Signal</keyword>
<keyword id="KW-0812">Transmembrane</keyword>
<keyword id="KW-1134">Transmembrane beta strand</keyword>
<sequence>MFKLKLLSISTIFILAGCVSLAPEYQRPPAPVPQQFSLSKNSLTPAVNSYQDTGWRNFFVDPQVSRLIGEALNNNRDLRMAALKVEEARAQFNVTDADRYPQLNASSGITYNGGLKGDKPTTQEYDAGLELSYELDFFGKLKNMSEADRQNYFASEEARRAVHILLVSNVSQSYFSQQLAYEQLRIARETLKNYEQSYAFVEQQLVTGSTNVLALEQARGQIESTRAEIAKREGDLAQANNALQLVLGTYRAVPSEKGIKGGEIAPVKLPPNLSSQILLQRPDIMEAEYQLKAADANIGAARAAFFPSITLTSGLSSSSTELSSLFTSGSGMWNFIPKIEIPIFNAGRNKANLKLAEIRQQQSVVNYEQKIQSAFKDVSDTLALRDSLSQQLESQQRYLDSLQITLQRARGLYASGAVSYIEVLDAERSLFATQQTILDLTYSRQVNEINLFTALGGGWVE</sequence>
<accession>Q9ZHD2</accession>
<geneLocation type="plasmid">
    <name>pMG101</name>
</geneLocation>